<comment type="function">
    <text evidence="1">The UvrABC repair system catalyzes the recognition and processing of DNA lesions. UvrC both incises the 5' and 3' sides of the lesion. The N-terminal half is responsible for the 3' incision and the C-terminal half is responsible for the 5' incision.</text>
</comment>
<comment type="subunit">
    <text evidence="1">Interacts with UvrB in an incision complex.</text>
</comment>
<comment type="subcellular location">
    <subcellularLocation>
        <location evidence="1">Cytoplasm</location>
    </subcellularLocation>
</comment>
<comment type="similarity">
    <text evidence="1">Belongs to the UvrC family.</text>
</comment>
<reference key="1">
    <citation type="submission" date="2007-10" db="EMBL/GenBank/DDBJ databases">
        <title>Complete sequence of Salinispora arenicola CNS-205.</title>
        <authorList>
            <consortium name="US DOE Joint Genome Institute"/>
            <person name="Copeland A."/>
            <person name="Lucas S."/>
            <person name="Lapidus A."/>
            <person name="Barry K."/>
            <person name="Glavina del Rio T."/>
            <person name="Dalin E."/>
            <person name="Tice H."/>
            <person name="Pitluck S."/>
            <person name="Foster B."/>
            <person name="Schmutz J."/>
            <person name="Larimer F."/>
            <person name="Land M."/>
            <person name="Hauser L."/>
            <person name="Kyrpides N."/>
            <person name="Ivanova N."/>
            <person name="Jensen P.R."/>
            <person name="Moore B.S."/>
            <person name="Penn K."/>
            <person name="Jenkins C."/>
            <person name="Udwary D."/>
            <person name="Xiang L."/>
            <person name="Gontang E."/>
            <person name="Richardson P."/>
        </authorList>
    </citation>
    <scope>NUCLEOTIDE SEQUENCE [LARGE SCALE GENOMIC DNA]</scope>
    <source>
        <strain>CNS-205</strain>
    </source>
</reference>
<dbReference type="EMBL" id="CP000850">
    <property type="protein sequence ID" value="ABV99140.1"/>
    <property type="molecule type" value="Genomic_DNA"/>
</dbReference>
<dbReference type="SMR" id="A8LW31"/>
<dbReference type="STRING" id="391037.Sare_3337"/>
<dbReference type="KEGG" id="saq:Sare_3337"/>
<dbReference type="PATRIC" id="fig|391037.6.peg.3366"/>
<dbReference type="eggNOG" id="COG0322">
    <property type="taxonomic scope" value="Bacteria"/>
</dbReference>
<dbReference type="HOGENOM" id="CLU_014841_2_0_11"/>
<dbReference type="OrthoDB" id="9804933at2"/>
<dbReference type="GO" id="GO:0005737">
    <property type="term" value="C:cytoplasm"/>
    <property type="evidence" value="ECO:0007669"/>
    <property type="project" value="UniProtKB-SubCell"/>
</dbReference>
<dbReference type="GO" id="GO:0009380">
    <property type="term" value="C:excinuclease repair complex"/>
    <property type="evidence" value="ECO:0007669"/>
    <property type="project" value="InterPro"/>
</dbReference>
<dbReference type="GO" id="GO:0003677">
    <property type="term" value="F:DNA binding"/>
    <property type="evidence" value="ECO:0007669"/>
    <property type="project" value="UniProtKB-UniRule"/>
</dbReference>
<dbReference type="GO" id="GO:0009381">
    <property type="term" value="F:excinuclease ABC activity"/>
    <property type="evidence" value="ECO:0007669"/>
    <property type="project" value="UniProtKB-UniRule"/>
</dbReference>
<dbReference type="GO" id="GO:0006289">
    <property type="term" value="P:nucleotide-excision repair"/>
    <property type="evidence" value="ECO:0007669"/>
    <property type="project" value="UniProtKB-UniRule"/>
</dbReference>
<dbReference type="GO" id="GO:0009432">
    <property type="term" value="P:SOS response"/>
    <property type="evidence" value="ECO:0007669"/>
    <property type="project" value="UniProtKB-UniRule"/>
</dbReference>
<dbReference type="CDD" id="cd10434">
    <property type="entry name" value="GIY-YIG_UvrC_Cho"/>
    <property type="match status" value="1"/>
</dbReference>
<dbReference type="FunFam" id="1.10.150.20:FF:000005">
    <property type="entry name" value="UvrABC system protein C"/>
    <property type="match status" value="1"/>
</dbReference>
<dbReference type="FunFam" id="3.40.1440.10:FF:000001">
    <property type="entry name" value="UvrABC system protein C"/>
    <property type="match status" value="1"/>
</dbReference>
<dbReference type="Gene3D" id="1.10.150.20">
    <property type="entry name" value="5' to 3' exonuclease, C-terminal subdomain"/>
    <property type="match status" value="1"/>
</dbReference>
<dbReference type="Gene3D" id="3.40.1440.10">
    <property type="entry name" value="GIY-YIG endonuclease"/>
    <property type="match status" value="1"/>
</dbReference>
<dbReference type="Gene3D" id="4.10.860.10">
    <property type="entry name" value="UVR domain"/>
    <property type="match status" value="1"/>
</dbReference>
<dbReference type="Gene3D" id="3.30.420.340">
    <property type="entry name" value="UvrC, RNAse H endonuclease domain"/>
    <property type="match status" value="1"/>
</dbReference>
<dbReference type="HAMAP" id="MF_00203">
    <property type="entry name" value="UvrC"/>
    <property type="match status" value="1"/>
</dbReference>
<dbReference type="InterPro" id="IPR000305">
    <property type="entry name" value="GIY-YIG_endonuc"/>
</dbReference>
<dbReference type="InterPro" id="IPR035901">
    <property type="entry name" value="GIY-YIG_endonuc_sf"/>
</dbReference>
<dbReference type="InterPro" id="IPR047296">
    <property type="entry name" value="GIY-YIG_UvrC_Cho"/>
</dbReference>
<dbReference type="InterPro" id="IPR003583">
    <property type="entry name" value="Hlx-hairpin-Hlx_DNA-bd_motif"/>
</dbReference>
<dbReference type="InterPro" id="IPR010994">
    <property type="entry name" value="RuvA_2-like"/>
</dbReference>
<dbReference type="InterPro" id="IPR001943">
    <property type="entry name" value="UVR_dom"/>
</dbReference>
<dbReference type="InterPro" id="IPR036876">
    <property type="entry name" value="UVR_dom_sf"/>
</dbReference>
<dbReference type="InterPro" id="IPR050066">
    <property type="entry name" value="UvrABC_protein_C"/>
</dbReference>
<dbReference type="InterPro" id="IPR004791">
    <property type="entry name" value="UvrC"/>
</dbReference>
<dbReference type="InterPro" id="IPR001162">
    <property type="entry name" value="UvrC_RNase_H_dom"/>
</dbReference>
<dbReference type="InterPro" id="IPR038476">
    <property type="entry name" value="UvrC_RNase_H_dom_sf"/>
</dbReference>
<dbReference type="NCBIfam" id="NF001824">
    <property type="entry name" value="PRK00558.1-5"/>
    <property type="match status" value="1"/>
</dbReference>
<dbReference type="NCBIfam" id="TIGR00194">
    <property type="entry name" value="uvrC"/>
    <property type="match status" value="1"/>
</dbReference>
<dbReference type="PANTHER" id="PTHR30562:SF1">
    <property type="entry name" value="UVRABC SYSTEM PROTEIN C"/>
    <property type="match status" value="1"/>
</dbReference>
<dbReference type="PANTHER" id="PTHR30562">
    <property type="entry name" value="UVRC/OXIDOREDUCTASE"/>
    <property type="match status" value="1"/>
</dbReference>
<dbReference type="Pfam" id="PF01541">
    <property type="entry name" value="GIY-YIG"/>
    <property type="match status" value="1"/>
</dbReference>
<dbReference type="Pfam" id="PF14520">
    <property type="entry name" value="HHH_5"/>
    <property type="match status" value="1"/>
</dbReference>
<dbReference type="Pfam" id="PF02151">
    <property type="entry name" value="UVR"/>
    <property type="match status" value="1"/>
</dbReference>
<dbReference type="Pfam" id="PF22920">
    <property type="entry name" value="UvrC_RNaseH"/>
    <property type="match status" value="1"/>
</dbReference>
<dbReference type="Pfam" id="PF08459">
    <property type="entry name" value="UvrC_RNaseH_dom"/>
    <property type="match status" value="1"/>
</dbReference>
<dbReference type="SMART" id="SM00465">
    <property type="entry name" value="GIYc"/>
    <property type="match status" value="1"/>
</dbReference>
<dbReference type="SMART" id="SM00278">
    <property type="entry name" value="HhH1"/>
    <property type="match status" value="2"/>
</dbReference>
<dbReference type="SUPFAM" id="SSF46600">
    <property type="entry name" value="C-terminal UvrC-binding domain of UvrB"/>
    <property type="match status" value="1"/>
</dbReference>
<dbReference type="SUPFAM" id="SSF82771">
    <property type="entry name" value="GIY-YIG endonuclease"/>
    <property type="match status" value="1"/>
</dbReference>
<dbReference type="SUPFAM" id="SSF47781">
    <property type="entry name" value="RuvA domain 2-like"/>
    <property type="match status" value="1"/>
</dbReference>
<dbReference type="PROSITE" id="PS50164">
    <property type="entry name" value="GIY_YIG"/>
    <property type="match status" value="1"/>
</dbReference>
<dbReference type="PROSITE" id="PS50151">
    <property type="entry name" value="UVR"/>
    <property type="match status" value="1"/>
</dbReference>
<dbReference type="PROSITE" id="PS50165">
    <property type="entry name" value="UVRC"/>
    <property type="match status" value="1"/>
</dbReference>
<proteinExistence type="inferred from homology"/>
<sequence>MADPSSYRPAPGTIPESPGVYRFRDGTGRVIYVGKARNLRSRLNSYFADPVNLHQRTRQMVFTAESVDWISVATEVEALQQEFTEIKQYDPRFNVRYRDDKSYPYLAVTVDEEFPRLQVMRGAKRRGVRYFGPYSHAWAIRETLDLLLRVFPARTCSSGVFKRAGQVGRPCLLGYIGKCSAPCVGSVSAEEHRDIVNGFCDFMAGRTDAMVRRLEREMAEASAELEFERAARLRDDLAALRRAMEKQTVVFGDGTDADVVAFADDPLEAAVQVFHVRDGRIRGQRGWVVEKTEDLTAGDLVHHFCTQVYGGEHGEAHVPRELLVPELPADVEALADWLSEHRGSRVTLRVPQRGDKRALLETVARNATDALARHKLKRAGDLTTRSKALDEIADTLGMRTAPLRIECFDISQIQGTDVVASMVVFEDGLPRKSEYRRFIIRGATDDLSAMSEVLRRRFARYLDARAETGEAGVESAGDPDAPAGPDAPDEPRVGTLVDPTTGRPRKFAYPPQLVVVDGGAPQVAAAAQALAELGVDDVALCGLAKRLEEVWLPDDDFPAILPRTSEGLYLLQRVRDEAHRFAITFHRQRRSRRMTESALDRVSGLGEVRRKALLRHFGSLKRLAAASVEEITEVPGIGKRTAEAILAALADPTGQSEPRR</sequence>
<gene>
    <name evidence="1" type="primary">uvrC</name>
    <name type="ordered locus">Sare_3337</name>
</gene>
<feature type="chain" id="PRO_1000077830" description="UvrABC system protein C">
    <location>
        <begin position="1"/>
        <end position="660"/>
    </location>
</feature>
<feature type="domain" description="GIY-YIG" evidence="1">
    <location>
        <begin position="16"/>
        <end position="95"/>
    </location>
</feature>
<feature type="domain" description="UVR" evidence="1">
    <location>
        <begin position="208"/>
        <end position="243"/>
    </location>
</feature>
<feature type="region of interest" description="Disordered" evidence="2">
    <location>
        <begin position="469"/>
        <end position="501"/>
    </location>
</feature>
<feature type="compositionally biased region" description="Low complexity" evidence="2">
    <location>
        <begin position="476"/>
        <end position="486"/>
    </location>
</feature>
<accession>A8LW31</accession>
<protein>
    <recommendedName>
        <fullName evidence="1">UvrABC system protein C</fullName>
        <shortName evidence="1">Protein UvrC</shortName>
    </recommendedName>
    <alternativeName>
        <fullName evidence="1">Excinuclease ABC subunit C</fullName>
    </alternativeName>
</protein>
<name>UVRC_SALAI</name>
<keyword id="KW-0963">Cytoplasm</keyword>
<keyword id="KW-0227">DNA damage</keyword>
<keyword id="KW-0228">DNA excision</keyword>
<keyword id="KW-0234">DNA repair</keyword>
<keyword id="KW-0267">Excision nuclease</keyword>
<keyword id="KW-0742">SOS response</keyword>
<organism>
    <name type="scientific">Salinispora arenicola (strain CNS-205)</name>
    <dbReference type="NCBI Taxonomy" id="391037"/>
    <lineage>
        <taxon>Bacteria</taxon>
        <taxon>Bacillati</taxon>
        <taxon>Actinomycetota</taxon>
        <taxon>Actinomycetes</taxon>
        <taxon>Micromonosporales</taxon>
        <taxon>Micromonosporaceae</taxon>
        <taxon>Salinispora</taxon>
    </lineage>
</organism>
<evidence type="ECO:0000255" key="1">
    <source>
        <dbReference type="HAMAP-Rule" id="MF_00203"/>
    </source>
</evidence>
<evidence type="ECO:0000256" key="2">
    <source>
        <dbReference type="SAM" id="MobiDB-lite"/>
    </source>
</evidence>